<proteinExistence type="inferred from homology"/>
<name>CNPD3_SYNPW</name>
<reference key="1">
    <citation type="submission" date="2006-05" db="EMBL/GenBank/DDBJ databases">
        <authorList>
            <consortium name="Genoscope"/>
        </authorList>
    </citation>
    <scope>NUCLEOTIDE SEQUENCE [LARGE SCALE GENOMIC DNA]</scope>
    <source>
        <strain>WH7803</strain>
    </source>
</reference>
<accession>A5GLK1</accession>
<sequence>MPRLIQLSDPHLVARAEGRVRGRSALSLFQKALAQALQEQPDLLLVTGDCCHDETWCGYVRLRDAVDAAIQQQAARTVCLGFTAGNHDHPQRLRAVLGRHWVVAPGVMDAGCWRLLVVSSHRAGGCAGVIGGVQLSWLNTQLREAETLGKFVVVALHHPPVPIGDASMDTIGLSDGEQLMDSLKRWPAVRVVLFGHIHQHWKGMAAPRSDLSLLGCPSTLVSFHPVQPCPLGRAWDPGGRLLDLMEDGSVQERLMRWSACEQAAG</sequence>
<dbReference type="EC" id="3.1.4.-" evidence="1"/>
<dbReference type="EMBL" id="CT971583">
    <property type="protein sequence ID" value="CAK23816.1"/>
    <property type="molecule type" value="Genomic_DNA"/>
</dbReference>
<dbReference type="SMR" id="A5GLK1"/>
<dbReference type="STRING" id="32051.SynWH7803_1390"/>
<dbReference type="KEGG" id="syx:SynWH7803_1390"/>
<dbReference type="eggNOG" id="COG1409">
    <property type="taxonomic scope" value="Bacteria"/>
</dbReference>
<dbReference type="HOGENOM" id="CLU_070320_0_0_3"/>
<dbReference type="OrthoDB" id="651281at2"/>
<dbReference type="Proteomes" id="UP000001566">
    <property type="component" value="Chromosome"/>
</dbReference>
<dbReference type="GO" id="GO:0004115">
    <property type="term" value="F:3',5'-cyclic-AMP phosphodiesterase activity"/>
    <property type="evidence" value="ECO:0007669"/>
    <property type="project" value="UniProtKB-EC"/>
</dbReference>
<dbReference type="GO" id="GO:0046872">
    <property type="term" value="F:metal ion binding"/>
    <property type="evidence" value="ECO:0007669"/>
    <property type="project" value="UniProtKB-KW"/>
</dbReference>
<dbReference type="GO" id="GO:0000166">
    <property type="term" value="F:nucleotide binding"/>
    <property type="evidence" value="ECO:0007669"/>
    <property type="project" value="UniProtKB-KW"/>
</dbReference>
<dbReference type="Gene3D" id="3.60.21.10">
    <property type="match status" value="1"/>
</dbReference>
<dbReference type="InterPro" id="IPR004843">
    <property type="entry name" value="Calcineurin-like_PHP_ApaH"/>
</dbReference>
<dbReference type="InterPro" id="IPR050884">
    <property type="entry name" value="CNP_phosphodiesterase-III"/>
</dbReference>
<dbReference type="InterPro" id="IPR029052">
    <property type="entry name" value="Metallo-depent_PP-like"/>
</dbReference>
<dbReference type="PANTHER" id="PTHR42988:SF2">
    <property type="entry name" value="CYCLIC NUCLEOTIDE PHOSPHODIESTERASE CBUA0032-RELATED"/>
    <property type="match status" value="1"/>
</dbReference>
<dbReference type="PANTHER" id="PTHR42988">
    <property type="entry name" value="PHOSPHOHYDROLASE"/>
    <property type="match status" value="1"/>
</dbReference>
<dbReference type="Pfam" id="PF00149">
    <property type="entry name" value="Metallophos"/>
    <property type="match status" value="1"/>
</dbReference>
<dbReference type="SUPFAM" id="SSF56300">
    <property type="entry name" value="Metallo-dependent phosphatases"/>
    <property type="match status" value="1"/>
</dbReference>
<keyword id="KW-0378">Hydrolase</keyword>
<keyword id="KW-0408">Iron</keyword>
<keyword id="KW-0479">Metal-binding</keyword>
<keyword id="KW-0547">Nucleotide-binding</keyword>
<keyword id="KW-1185">Reference proteome</keyword>
<protein>
    <recommendedName>
        <fullName evidence="1">Probable cyclic nucleotide phosphodiesterase SynWH7803_1390</fullName>
        <ecNumber evidence="1">3.1.4.-</ecNumber>
    </recommendedName>
</protein>
<comment type="cofactor">
    <cofactor evidence="2">
        <name>Fe(2+)</name>
        <dbReference type="ChEBI" id="CHEBI:29033"/>
    </cofactor>
    <text evidence="2">Binds 2 Fe(2+) ions per subunit.</text>
</comment>
<comment type="similarity">
    <text evidence="3">Belongs to the cyclic nucleotide phosphodiesterase class-III family.</text>
</comment>
<feature type="chain" id="PRO_0000413380" description="Probable cyclic nucleotide phosphodiesterase SynWH7803_1390">
    <location>
        <begin position="1"/>
        <end position="265"/>
    </location>
</feature>
<feature type="binding site" evidence="2">
    <location>
        <position position="9"/>
    </location>
    <ligand>
        <name>Fe cation</name>
        <dbReference type="ChEBI" id="CHEBI:24875"/>
        <label>1</label>
    </ligand>
</feature>
<feature type="binding site" evidence="1">
    <location>
        <position position="11"/>
    </location>
    <ligand>
        <name>AMP</name>
        <dbReference type="ChEBI" id="CHEBI:456215"/>
    </ligand>
</feature>
<feature type="binding site" evidence="2">
    <location>
        <position position="11"/>
    </location>
    <ligand>
        <name>Fe cation</name>
        <dbReference type="ChEBI" id="CHEBI:24875"/>
        <label>1</label>
    </ligand>
</feature>
<feature type="binding site" evidence="1">
    <location>
        <position position="49"/>
    </location>
    <ligand>
        <name>AMP</name>
        <dbReference type="ChEBI" id="CHEBI:456215"/>
    </ligand>
</feature>
<feature type="binding site" evidence="2">
    <location>
        <position position="49"/>
    </location>
    <ligand>
        <name>Fe cation</name>
        <dbReference type="ChEBI" id="CHEBI:24875"/>
        <label>1</label>
    </ligand>
</feature>
<feature type="binding site" evidence="2">
    <location>
        <position position="49"/>
    </location>
    <ligand>
        <name>Fe cation</name>
        <dbReference type="ChEBI" id="CHEBI:24875"/>
        <label>2</label>
    </ligand>
</feature>
<feature type="binding site" evidence="1">
    <location>
        <begin position="86"/>
        <end position="87"/>
    </location>
    <ligand>
        <name>AMP</name>
        <dbReference type="ChEBI" id="CHEBI:456215"/>
    </ligand>
</feature>
<feature type="binding site" evidence="2">
    <location>
        <position position="86"/>
    </location>
    <ligand>
        <name>Fe cation</name>
        <dbReference type="ChEBI" id="CHEBI:24875"/>
        <label>2</label>
    </ligand>
</feature>
<feature type="binding site" evidence="2">
    <location>
        <position position="157"/>
    </location>
    <ligand>
        <name>Fe cation</name>
        <dbReference type="ChEBI" id="CHEBI:24875"/>
        <label>2</label>
    </ligand>
</feature>
<feature type="binding site" evidence="2">
    <location>
        <position position="196"/>
    </location>
    <ligand>
        <name>Fe cation</name>
        <dbReference type="ChEBI" id="CHEBI:24875"/>
        <label>2</label>
    </ligand>
</feature>
<feature type="binding site" evidence="1">
    <location>
        <position position="198"/>
    </location>
    <ligand>
        <name>AMP</name>
        <dbReference type="ChEBI" id="CHEBI:456215"/>
    </ligand>
</feature>
<feature type="binding site" evidence="2">
    <location>
        <position position="198"/>
    </location>
    <ligand>
        <name>Fe cation</name>
        <dbReference type="ChEBI" id="CHEBI:24875"/>
        <label>1</label>
    </ligand>
</feature>
<gene>
    <name type="ordered locus">SynWH7803_1390</name>
</gene>
<evidence type="ECO:0000250" key="1">
    <source>
        <dbReference type="UniProtKB" id="P9WP65"/>
    </source>
</evidence>
<evidence type="ECO:0000250" key="2">
    <source>
        <dbReference type="UniProtKB" id="Q6XBH1"/>
    </source>
</evidence>
<evidence type="ECO:0000305" key="3"/>
<organism>
    <name type="scientific">Synechococcus sp. (strain WH7803)</name>
    <dbReference type="NCBI Taxonomy" id="32051"/>
    <lineage>
        <taxon>Bacteria</taxon>
        <taxon>Bacillati</taxon>
        <taxon>Cyanobacteriota</taxon>
        <taxon>Cyanophyceae</taxon>
        <taxon>Synechococcales</taxon>
        <taxon>Synechococcaceae</taxon>
        <taxon>Synechococcus</taxon>
    </lineage>
</organism>